<keyword id="KW-0963">Cytoplasm</keyword>
<keyword id="KW-0274">FAD</keyword>
<keyword id="KW-0285">Flavoprotein</keyword>
<keyword id="KW-0489">Methyltransferase</keyword>
<keyword id="KW-0520">NAD</keyword>
<keyword id="KW-0521">NADP</keyword>
<keyword id="KW-0808">Transferase</keyword>
<keyword id="KW-0819">tRNA processing</keyword>
<organism>
    <name type="scientific">Synechococcus sp. (strain ATCC 27144 / PCC 6301 / SAUG 1402/1)</name>
    <name type="common">Anacystis nidulans</name>
    <dbReference type="NCBI Taxonomy" id="269084"/>
    <lineage>
        <taxon>Bacteria</taxon>
        <taxon>Bacillati</taxon>
        <taxon>Cyanobacteriota</taxon>
        <taxon>Cyanophyceae</taxon>
        <taxon>Synechococcales</taxon>
        <taxon>Synechococcaceae</taxon>
        <taxon>Synechococcus</taxon>
    </lineage>
</organism>
<protein>
    <recommendedName>
        <fullName evidence="1">Methylenetetrahydrofolate--tRNA-(uracil-5-)-methyltransferase TrmFO</fullName>
        <ecNumber evidence="1">2.1.1.74</ecNumber>
    </recommendedName>
    <alternativeName>
        <fullName evidence="1">Folate-dependent tRNA (uracil-5-)-methyltransferase</fullName>
    </alternativeName>
    <alternativeName>
        <fullName evidence="1">Folate-dependent tRNA(M-5-U54)-methyltransferase</fullName>
    </alternativeName>
</protein>
<feature type="chain" id="PRO_0000117282" description="Methylenetetrahydrofolate--tRNA-(uracil-5-)-methyltransferase TrmFO">
    <location>
        <begin position="1"/>
        <end position="466"/>
    </location>
</feature>
<feature type="binding site" evidence="1">
    <location>
        <begin position="12"/>
        <end position="17"/>
    </location>
    <ligand>
        <name>FAD</name>
        <dbReference type="ChEBI" id="CHEBI:57692"/>
    </ligand>
</feature>
<proteinExistence type="inferred from homology"/>
<comment type="function">
    <text evidence="1">Catalyzes the folate-dependent formation of 5-methyl-uridine at position 54 (M-5-U54) in all tRNAs.</text>
</comment>
<comment type="catalytic activity">
    <reaction evidence="1">
        <text>uridine(54) in tRNA + (6R)-5,10-methylene-5,6,7,8-tetrahydrofolate + NADH + H(+) = 5-methyluridine(54) in tRNA + (6S)-5,6,7,8-tetrahydrofolate + NAD(+)</text>
        <dbReference type="Rhea" id="RHEA:16873"/>
        <dbReference type="Rhea" id="RHEA-COMP:10167"/>
        <dbReference type="Rhea" id="RHEA-COMP:10193"/>
        <dbReference type="ChEBI" id="CHEBI:15378"/>
        <dbReference type="ChEBI" id="CHEBI:15636"/>
        <dbReference type="ChEBI" id="CHEBI:57453"/>
        <dbReference type="ChEBI" id="CHEBI:57540"/>
        <dbReference type="ChEBI" id="CHEBI:57945"/>
        <dbReference type="ChEBI" id="CHEBI:65315"/>
        <dbReference type="ChEBI" id="CHEBI:74447"/>
        <dbReference type="EC" id="2.1.1.74"/>
    </reaction>
</comment>
<comment type="catalytic activity">
    <reaction evidence="1">
        <text>uridine(54) in tRNA + (6R)-5,10-methylene-5,6,7,8-tetrahydrofolate + NADPH + H(+) = 5-methyluridine(54) in tRNA + (6S)-5,6,7,8-tetrahydrofolate + NADP(+)</text>
        <dbReference type="Rhea" id="RHEA:62372"/>
        <dbReference type="Rhea" id="RHEA-COMP:10167"/>
        <dbReference type="Rhea" id="RHEA-COMP:10193"/>
        <dbReference type="ChEBI" id="CHEBI:15378"/>
        <dbReference type="ChEBI" id="CHEBI:15636"/>
        <dbReference type="ChEBI" id="CHEBI:57453"/>
        <dbReference type="ChEBI" id="CHEBI:57783"/>
        <dbReference type="ChEBI" id="CHEBI:58349"/>
        <dbReference type="ChEBI" id="CHEBI:65315"/>
        <dbReference type="ChEBI" id="CHEBI:74447"/>
        <dbReference type="EC" id="2.1.1.74"/>
    </reaction>
</comment>
<comment type="cofactor">
    <cofactor evidence="1">
        <name>FAD</name>
        <dbReference type="ChEBI" id="CHEBI:57692"/>
    </cofactor>
</comment>
<comment type="subcellular location">
    <subcellularLocation>
        <location evidence="1">Cytoplasm</location>
    </subcellularLocation>
</comment>
<comment type="similarity">
    <text evidence="1">Belongs to the MnmG family. TrmFO subfamily.</text>
</comment>
<evidence type="ECO:0000255" key="1">
    <source>
        <dbReference type="HAMAP-Rule" id="MF_01037"/>
    </source>
</evidence>
<dbReference type="EC" id="2.1.1.74" evidence="1"/>
<dbReference type="EMBL" id="AP008231">
    <property type="protein sequence ID" value="BAD78428.1"/>
    <property type="molecule type" value="Genomic_DNA"/>
</dbReference>
<dbReference type="RefSeq" id="WP_011242552.1">
    <property type="nucleotide sequence ID" value="NZ_CP085785.1"/>
</dbReference>
<dbReference type="SMR" id="Q5N5J0"/>
<dbReference type="GeneID" id="72430176"/>
<dbReference type="KEGG" id="syc:syc0238_d"/>
<dbReference type="eggNOG" id="COG1206">
    <property type="taxonomic scope" value="Bacteria"/>
</dbReference>
<dbReference type="Proteomes" id="UP000001175">
    <property type="component" value="Chromosome"/>
</dbReference>
<dbReference type="GO" id="GO:0005829">
    <property type="term" value="C:cytosol"/>
    <property type="evidence" value="ECO:0007669"/>
    <property type="project" value="TreeGrafter"/>
</dbReference>
<dbReference type="GO" id="GO:0050660">
    <property type="term" value="F:flavin adenine dinucleotide binding"/>
    <property type="evidence" value="ECO:0007669"/>
    <property type="project" value="UniProtKB-UniRule"/>
</dbReference>
<dbReference type="GO" id="GO:0047151">
    <property type="term" value="F:tRNA (uracil(54)-C5)-methyltransferase activity, 5,10-methylenetetrahydrofolate-dependent"/>
    <property type="evidence" value="ECO:0007669"/>
    <property type="project" value="UniProtKB-UniRule"/>
</dbReference>
<dbReference type="GO" id="GO:0030488">
    <property type="term" value="P:tRNA methylation"/>
    <property type="evidence" value="ECO:0007669"/>
    <property type="project" value="TreeGrafter"/>
</dbReference>
<dbReference type="GO" id="GO:0002098">
    <property type="term" value="P:tRNA wobble uridine modification"/>
    <property type="evidence" value="ECO:0007669"/>
    <property type="project" value="TreeGrafter"/>
</dbReference>
<dbReference type="Gene3D" id="3.50.50.60">
    <property type="entry name" value="FAD/NAD(P)-binding domain"/>
    <property type="match status" value="2"/>
</dbReference>
<dbReference type="HAMAP" id="MF_01037">
    <property type="entry name" value="TrmFO"/>
    <property type="match status" value="1"/>
</dbReference>
<dbReference type="InterPro" id="IPR036188">
    <property type="entry name" value="FAD/NAD-bd_sf"/>
</dbReference>
<dbReference type="InterPro" id="IPR002218">
    <property type="entry name" value="MnmG-rel"/>
</dbReference>
<dbReference type="InterPro" id="IPR040131">
    <property type="entry name" value="MnmG_N"/>
</dbReference>
<dbReference type="InterPro" id="IPR004417">
    <property type="entry name" value="TrmFO"/>
</dbReference>
<dbReference type="NCBIfam" id="TIGR00137">
    <property type="entry name" value="gid_trmFO"/>
    <property type="match status" value="1"/>
</dbReference>
<dbReference type="NCBIfam" id="NF003739">
    <property type="entry name" value="PRK05335.1"/>
    <property type="match status" value="1"/>
</dbReference>
<dbReference type="PANTHER" id="PTHR11806">
    <property type="entry name" value="GLUCOSE INHIBITED DIVISION PROTEIN A"/>
    <property type="match status" value="1"/>
</dbReference>
<dbReference type="PANTHER" id="PTHR11806:SF2">
    <property type="entry name" value="METHYLENETETRAHYDROFOLATE--TRNA-(URACIL-5-)-METHYLTRANSFERASE TRMFO"/>
    <property type="match status" value="1"/>
</dbReference>
<dbReference type="Pfam" id="PF01134">
    <property type="entry name" value="GIDA"/>
    <property type="match status" value="1"/>
</dbReference>
<dbReference type="PRINTS" id="PR00411">
    <property type="entry name" value="PNDRDTASEI"/>
</dbReference>
<dbReference type="SUPFAM" id="SSF51905">
    <property type="entry name" value="FAD/NAD(P)-binding domain"/>
    <property type="match status" value="1"/>
</dbReference>
<reference key="1">
    <citation type="journal article" date="2007" name="Photosyn. Res.">
        <title>Complete nucleotide sequence of the freshwater unicellular cyanobacterium Synechococcus elongatus PCC 6301 chromosome: gene content and organization.</title>
        <authorList>
            <person name="Sugita C."/>
            <person name="Ogata K."/>
            <person name="Shikata M."/>
            <person name="Jikuya H."/>
            <person name="Takano J."/>
            <person name="Furumichi M."/>
            <person name="Kanehisa M."/>
            <person name="Omata T."/>
            <person name="Sugiura M."/>
            <person name="Sugita M."/>
        </authorList>
    </citation>
    <scope>NUCLEOTIDE SEQUENCE [LARGE SCALE GENOMIC DNA]</scope>
    <source>
        <strain>ATCC 27144 / PCC 6301 / SAUG 1402/1</strain>
    </source>
</reference>
<accession>Q5N5J0</accession>
<gene>
    <name evidence="1" type="primary">trmFO</name>
    <name type="synonym">gid</name>
    <name type="ordered locus">syc0238_d</name>
</gene>
<name>TRMFO_SYNP6</name>
<sequence>MAAISQPVIVIGAGLAGTEAAWQIAEAGVPVILYEMRPQRQSPAHHSESFAELVCSNSFGAMASDRAAGLLHEELRRLGSLVFSKASEHQVPAGGALAVDRALFSEDLTRTVADHPLVEIRREELRSLPTEGIVVLCTGPLTSPDLAEDLQRFTGQDYCSFFDAASPIVTGESIDQAIAFRASRYDKGEAAYLNCPLNRDQYLAFREALVTAEQAELKDFEQESAKFFEGCLPIEELARRGEDTMRYGPLKPVGLFDARLGDWRDPENRSRRPYAIVQLRQEDRAGNLWNLVGFQTNLRWGEQKRIFQMIPGLSQAEFVRFGVMHRNTFVNAPQLLDASLQFRQRPTLLAAGQLIGTEGYSAAVAGGWLAGTNAARLALGRSPLVLPDTLVSGSLFRFISSAEPKYFQPMPPNFGILPNLEQPPRNKKDRYAAYRDRALQDLRDWQQTHAIGNLSPSTGLATTAIA</sequence>